<sequence>MSLVRAHFLVKGFVQGVGFRYFVLRQAAALQLNGWVRNRYNGSVEGVVEGPEAEVKEFLDRCRRGPAWAEVKEVKVQYEEPRGETTFRIRSSV</sequence>
<protein>
    <recommendedName>
        <fullName>Acylphosphatase</fullName>
        <ecNumber>3.6.1.7</ecNumber>
    </recommendedName>
    <alternativeName>
        <fullName>Acylphosphate phosphohydrolase</fullName>
    </alternativeName>
</protein>
<evidence type="ECO:0000255" key="1">
    <source>
        <dbReference type="PROSITE-ProRule" id="PRU00520"/>
    </source>
</evidence>
<evidence type="ECO:0000305" key="2"/>
<name>ACYP_MOOTA</name>
<dbReference type="EC" id="3.6.1.7"/>
<dbReference type="EMBL" id="CP000232">
    <property type="protein sequence ID" value="ABC19530.1"/>
    <property type="molecule type" value="Genomic_DNA"/>
</dbReference>
<dbReference type="RefSeq" id="YP_430073.1">
    <property type="nucleotide sequence ID" value="NC_007644.1"/>
</dbReference>
<dbReference type="SMR" id="Q2RJ59"/>
<dbReference type="STRING" id="264732.Moth_1216"/>
<dbReference type="EnsemblBacteria" id="ABC19530">
    <property type="protein sequence ID" value="ABC19530"/>
    <property type="gene ID" value="Moth_1216"/>
</dbReference>
<dbReference type="KEGG" id="mta:Moth_1216"/>
<dbReference type="PATRIC" id="fig|264732.11.peg.1305"/>
<dbReference type="eggNOG" id="COG1254">
    <property type="taxonomic scope" value="Bacteria"/>
</dbReference>
<dbReference type="HOGENOM" id="CLU_141932_3_2_9"/>
<dbReference type="OrthoDB" id="9808093at2"/>
<dbReference type="GO" id="GO:0003998">
    <property type="term" value="F:acylphosphatase activity"/>
    <property type="evidence" value="ECO:0007669"/>
    <property type="project" value="UniProtKB-EC"/>
</dbReference>
<dbReference type="Gene3D" id="3.30.70.100">
    <property type="match status" value="1"/>
</dbReference>
<dbReference type="InterPro" id="IPR020456">
    <property type="entry name" value="Acylphosphatase"/>
</dbReference>
<dbReference type="InterPro" id="IPR001792">
    <property type="entry name" value="Acylphosphatase-like_dom"/>
</dbReference>
<dbReference type="InterPro" id="IPR036046">
    <property type="entry name" value="Acylphosphatase-like_dom_sf"/>
</dbReference>
<dbReference type="InterPro" id="IPR017968">
    <property type="entry name" value="Acylphosphatase_CS"/>
</dbReference>
<dbReference type="PANTHER" id="PTHR47268">
    <property type="entry name" value="ACYLPHOSPHATASE"/>
    <property type="match status" value="1"/>
</dbReference>
<dbReference type="PANTHER" id="PTHR47268:SF4">
    <property type="entry name" value="ACYLPHOSPHATASE"/>
    <property type="match status" value="1"/>
</dbReference>
<dbReference type="Pfam" id="PF00708">
    <property type="entry name" value="Acylphosphatase"/>
    <property type="match status" value="1"/>
</dbReference>
<dbReference type="PRINTS" id="PR00112">
    <property type="entry name" value="ACYLPHPHTASE"/>
</dbReference>
<dbReference type="SUPFAM" id="SSF54975">
    <property type="entry name" value="Acylphosphatase/BLUF domain-like"/>
    <property type="match status" value="1"/>
</dbReference>
<dbReference type="PROSITE" id="PS00150">
    <property type="entry name" value="ACYLPHOSPHATASE_1"/>
    <property type="match status" value="1"/>
</dbReference>
<dbReference type="PROSITE" id="PS00151">
    <property type="entry name" value="ACYLPHOSPHATASE_2"/>
    <property type="match status" value="1"/>
</dbReference>
<dbReference type="PROSITE" id="PS51160">
    <property type="entry name" value="ACYLPHOSPHATASE_3"/>
    <property type="match status" value="1"/>
</dbReference>
<feature type="chain" id="PRO_0000326746" description="Acylphosphatase">
    <location>
        <begin position="1"/>
        <end position="93"/>
    </location>
</feature>
<feature type="domain" description="Acylphosphatase-like" evidence="1">
    <location>
        <begin position="5"/>
        <end position="91"/>
    </location>
</feature>
<feature type="active site" evidence="1">
    <location>
        <position position="20"/>
    </location>
</feature>
<feature type="active site" evidence="1">
    <location>
        <position position="38"/>
    </location>
</feature>
<organism>
    <name type="scientific">Moorella thermoacetica (strain ATCC 39073 / JCM 9320)</name>
    <dbReference type="NCBI Taxonomy" id="264732"/>
    <lineage>
        <taxon>Bacteria</taxon>
        <taxon>Bacillati</taxon>
        <taxon>Bacillota</taxon>
        <taxon>Clostridia</taxon>
        <taxon>Moorellales</taxon>
        <taxon>Moorellaceae</taxon>
        <taxon>Moorella</taxon>
    </lineage>
</organism>
<accession>Q2RJ59</accession>
<gene>
    <name type="primary">acyP</name>
    <name type="ordered locus">Moth_1216</name>
</gene>
<comment type="catalytic activity">
    <reaction>
        <text>an acyl phosphate + H2O = a carboxylate + phosphate + H(+)</text>
        <dbReference type="Rhea" id="RHEA:14965"/>
        <dbReference type="ChEBI" id="CHEBI:15377"/>
        <dbReference type="ChEBI" id="CHEBI:15378"/>
        <dbReference type="ChEBI" id="CHEBI:29067"/>
        <dbReference type="ChEBI" id="CHEBI:43474"/>
        <dbReference type="ChEBI" id="CHEBI:59918"/>
        <dbReference type="EC" id="3.6.1.7"/>
    </reaction>
</comment>
<comment type="similarity">
    <text evidence="2">Belongs to the acylphosphatase family.</text>
</comment>
<keyword id="KW-0378">Hydrolase</keyword>
<reference key="1">
    <citation type="journal article" date="2008" name="Environ. Microbiol.">
        <title>The complete genome sequence of Moorella thermoacetica (f. Clostridium thermoaceticum).</title>
        <authorList>
            <person name="Pierce E."/>
            <person name="Xie G."/>
            <person name="Barabote R.D."/>
            <person name="Saunders E."/>
            <person name="Han C.S."/>
            <person name="Detter J.C."/>
            <person name="Richardson P."/>
            <person name="Brettin T.S."/>
            <person name="Das A."/>
            <person name="Ljungdahl L.G."/>
            <person name="Ragsdale S.W."/>
        </authorList>
    </citation>
    <scope>NUCLEOTIDE SEQUENCE [LARGE SCALE GENOMIC DNA]</scope>
    <source>
        <strain>ATCC 39073 / JCM 9320</strain>
    </source>
</reference>
<proteinExistence type="inferred from homology"/>